<name>SPRTL_STRZJ</name>
<feature type="chain" id="PRO_1000148329" description="Protein SprT-like">
    <location>
        <begin position="1"/>
        <end position="149"/>
    </location>
</feature>
<feature type="domain" description="SprT-like" evidence="1">
    <location>
        <begin position="4"/>
        <end position="143"/>
    </location>
</feature>
<feature type="active site" evidence="1">
    <location>
        <position position="65"/>
    </location>
</feature>
<feature type="binding site" evidence="1">
    <location>
        <position position="64"/>
    </location>
    <ligand>
        <name>Zn(2+)</name>
        <dbReference type="ChEBI" id="CHEBI:29105"/>
    </ligand>
</feature>
<feature type="binding site" evidence="1">
    <location>
        <position position="68"/>
    </location>
    <ligand>
        <name>Zn(2+)</name>
        <dbReference type="ChEBI" id="CHEBI:29105"/>
    </ligand>
</feature>
<gene>
    <name type="ordered locus">SPJ_0848</name>
</gene>
<accession>C1CDQ5</accession>
<evidence type="ECO:0000255" key="1">
    <source>
        <dbReference type="HAMAP-Rule" id="MF_00745"/>
    </source>
</evidence>
<dbReference type="EMBL" id="CP000919">
    <property type="protein sequence ID" value="ACO18814.1"/>
    <property type="molecule type" value="Genomic_DNA"/>
</dbReference>
<dbReference type="RefSeq" id="WP_000778590.1">
    <property type="nucleotide sequence ID" value="NC_012466.1"/>
</dbReference>
<dbReference type="KEGG" id="sjj:SPJ_0848"/>
<dbReference type="HOGENOM" id="CLU_123820_0_0_9"/>
<dbReference type="Proteomes" id="UP000002206">
    <property type="component" value="Chromosome"/>
</dbReference>
<dbReference type="GO" id="GO:0005737">
    <property type="term" value="C:cytoplasm"/>
    <property type="evidence" value="ECO:0007669"/>
    <property type="project" value="UniProtKB-SubCell"/>
</dbReference>
<dbReference type="GO" id="GO:0008270">
    <property type="term" value="F:zinc ion binding"/>
    <property type="evidence" value="ECO:0007669"/>
    <property type="project" value="UniProtKB-UniRule"/>
</dbReference>
<dbReference type="GO" id="GO:0006950">
    <property type="term" value="P:response to stress"/>
    <property type="evidence" value="ECO:0007669"/>
    <property type="project" value="UniProtKB-ARBA"/>
</dbReference>
<dbReference type="HAMAP" id="MF_00745">
    <property type="entry name" value="SprT_like"/>
    <property type="match status" value="1"/>
</dbReference>
<dbReference type="InterPro" id="IPR006640">
    <property type="entry name" value="SprT-like_domain"/>
</dbReference>
<dbReference type="InterPro" id="IPR035240">
    <property type="entry name" value="SprT_Zn_ribbon"/>
</dbReference>
<dbReference type="InterPro" id="IPR023524">
    <property type="entry name" value="Uncharacterised_SprT-like"/>
</dbReference>
<dbReference type="NCBIfam" id="NF003339">
    <property type="entry name" value="PRK04351.1"/>
    <property type="match status" value="1"/>
</dbReference>
<dbReference type="Pfam" id="PF10263">
    <property type="entry name" value="SprT-like"/>
    <property type="match status" value="1"/>
</dbReference>
<dbReference type="Pfam" id="PF17283">
    <property type="entry name" value="Zn_ribbon_SprT"/>
    <property type="match status" value="1"/>
</dbReference>
<dbReference type="SMART" id="SM00731">
    <property type="entry name" value="SprT"/>
    <property type="match status" value="1"/>
</dbReference>
<keyword id="KW-0963">Cytoplasm</keyword>
<keyword id="KW-0479">Metal-binding</keyword>
<keyword id="KW-0862">Zinc</keyword>
<comment type="cofactor">
    <cofactor evidence="1">
        <name>Zn(2+)</name>
        <dbReference type="ChEBI" id="CHEBI:29105"/>
    </cofactor>
    <text evidence="1">Binds 1 zinc ion.</text>
</comment>
<comment type="subcellular location">
    <subcellularLocation>
        <location evidence="1">Cytoplasm</location>
    </subcellularLocation>
</comment>
<comment type="similarity">
    <text evidence="1">Belongs to the SprT family.</text>
</comment>
<proteinExistence type="inferred from homology"/>
<sequence length="149" mass="17969">MKLTDYVKQVSLEDFGRPFIHHVQWNRRLRSTGGRFFPKDGHLDFNPKVYQELGLDVFRKIVRHELCHYHLYFQGKGYQHKDRDFKELLKAVDGLRFVPSLPNSNSKPLKLYRCQSCQQRYQRKRRIDTKRYRCGLCRGKLLLINQPED</sequence>
<organism>
    <name type="scientific">Streptococcus pneumoniae (strain JJA)</name>
    <dbReference type="NCBI Taxonomy" id="488222"/>
    <lineage>
        <taxon>Bacteria</taxon>
        <taxon>Bacillati</taxon>
        <taxon>Bacillota</taxon>
        <taxon>Bacilli</taxon>
        <taxon>Lactobacillales</taxon>
        <taxon>Streptococcaceae</taxon>
        <taxon>Streptococcus</taxon>
    </lineage>
</organism>
<protein>
    <recommendedName>
        <fullName evidence="1">Protein SprT-like</fullName>
    </recommendedName>
</protein>
<reference key="1">
    <citation type="journal article" date="2010" name="Genome Biol.">
        <title>Structure and dynamics of the pan-genome of Streptococcus pneumoniae and closely related species.</title>
        <authorList>
            <person name="Donati C."/>
            <person name="Hiller N.L."/>
            <person name="Tettelin H."/>
            <person name="Muzzi A."/>
            <person name="Croucher N.J."/>
            <person name="Angiuoli S.V."/>
            <person name="Oggioni M."/>
            <person name="Dunning Hotopp J.C."/>
            <person name="Hu F.Z."/>
            <person name="Riley D.R."/>
            <person name="Covacci A."/>
            <person name="Mitchell T.J."/>
            <person name="Bentley S.D."/>
            <person name="Kilian M."/>
            <person name="Ehrlich G.D."/>
            <person name="Rappuoli R."/>
            <person name="Moxon E.R."/>
            <person name="Masignani V."/>
        </authorList>
    </citation>
    <scope>NUCLEOTIDE SEQUENCE [LARGE SCALE GENOMIC DNA]</scope>
    <source>
        <strain>JJA</strain>
    </source>
</reference>